<keyword id="KW-0325">Glycoprotein</keyword>
<keyword id="KW-1032">Host cell membrane</keyword>
<keyword id="KW-1043">Host membrane</keyword>
<keyword id="KW-1048">Host nucleus</keyword>
<keyword id="KW-0472">Membrane</keyword>
<keyword id="KW-1185">Reference proteome</keyword>
<keyword id="KW-0964">Secreted</keyword>
<keyword id="KW-0732">Signal</keyword>
<keyword id="KW-0843">Virulence</keyword>
<reference key="1">
    <citation type="journal article" date="2009" name="Nature">
        <title>Genome sequence and analysis of the Irish potato famine pathogen Phytophthora infestans.</title>
        <authorList>
            <consortium name="The Broad Institute Genome Sequencing Platform"/>
            <person name="Haas B.J."/>
            <person name="Kamoun S."/>
            <person name="Zody M.C."/>
            <person name="Jiang R.H."/>
            <person name="Handsaker R.E."/>
            <person name="Cano L.M."/>
            <person name="Grabherr M."/>
            <person name="Kodira C.D."/>
            <person name="Raffaele S."/>
            <person name="Torto-Alalibo T."/>
            <person name="Bozkurt T.O."/>
            <person name="Ah-Fong A.M."/>
            <person name="Alvarado L."/>
            <person name="Anderson V.L."/>
            <person name="Armstrong M.R."/>
            <person name="Avrova A."/>
            <person name="Baxter L."/>
            <person name="Beynon J."/>
            <person name="Boevink P.C."/>
            <person name="Bollmann S.R."/>
            <person name="Bos J.I."/>
            <person name="Bulone V."/>
            <person name="Cai G."/>
            <person name="Cakir C."/>
            <person name="Carrington J.C."/>
            <person name="Chawner M."/>
            <person name="Conti L."/>
            <person name="Costanzo S."/>
            <person name="Ewan R."/>
            <person name="Fahlgren N."/>
            <person name="Fischbach M.A."/>
            <person name="Fugelstad J."/>
            <person name="Gilroy E.M."/>
            <person name="Gnerre S."/>
            <person name="Green P.J."/>
            <person name="Grenville-Briggs L.J."/>
            <person name="Griffith J."/>
            <person name="Grunwald N.J."/>
            <person name="Horn K."/>
            <person name="Horner N.R."/>
            <person name="Hu C.H."/>
            <person name="Huitema E."/>
            <person name="Jeong D.H."/>
            <person name="Jones A.M."/>
            <person name="Jones J.D."/>
            <person name="Jones R.W."/>
            <person name="Karlsson E.K."/>
            <person name="Kunjeti S.G."/>
            <person name="Lamour K."/>
            <person name="Liu Z."/>
            <person name="Ma L."/>
            <person name="Maclean D."/>
            <person name="Chibucos M.C."/>
            <person name="McDonald H."/>
            <person name="McWalters J."/>
            <person name="Meijer H.J."/>
            <person name="Morgan W."/>
            <person name="Morris P.F."/>
            <person name="Munro C.A."/>
            <person name="O'Neill K."/>
            <person name="Ospina-Giraldo M."/>
            <person name="Pinzon A."/>
            <person name="Pritchard L."/>
            <person name="Ramsahoye B."/>
            <person name="Ren Q."/>
            <person name="Restrepo S."/>
            <person name="Roy S."/>
            <person name="Sadanandom A."/>
            <person name="Savidor A."/>
            <person name="Schornack S."/>
            <person name="Schwartz D.C."/>
            <person name="Schumann U.D."/>
            <person name="Schwessinger B."/>
            <person name="Seyer L."/>
            <person name="Sharpe T."/>
            <person name="Silvar C."/>
            <person name="Song J."/>
            <person name="Studholme D.J."/>
            <person name="Sykes S."/>
            <person name="Thines M."/>
            <person name="van de Vondervoort P.J."/>
            <person name="Phuntumart V."/>
            <person name="Wawra S."/>
            <person name="Weide R."/>
            <person name="Win J."/>
            <person name="Young C."/>
            <person name="Zhou S."/>
            <person name="Fry W."/>
            <person name="Meyers B.C."/>
            <person name="van West P."/>
            <person name="Ristaino J."/>
            <person name="Govers F."/>
            <person name="Birch P.R."/>
            <person name="Whisson S.C."/>
            <person name="Judelson H.S."/>
            <person name="Nusbaum C."/>
        </authorList>
    </citation>
    <scope>NUCLEOTIDE SEQUENCE [LARGE SCALE GENOMIC DNA]</scope>
    <scope>INDUCTION</scope>
    <source>
        <strain>T30-4</strain>
    </source>
</reference>
<reference key="2">
    <citation type="journal article" date="1994" name="Gene">
        <title>Structure and genomic organization of the ipiB and ipiO gene clusters of Phytophthora infestans.</title>
        <authorList>
            <person name="Pieterse C.M."/>
            <person name="van West P."/>
            <person name="Verbakel H.M."/>
            <person name="Brasse P.W."/>
            <person name="van den Berg-Velthuis G.C."/>
            <person name="Govers F."/>
        </authorList>
    </citation>
    <scope>IDENTIFICATION</scope>
    <scope>INDUCTION</scope>
</reference>
<reference key="3">
    <citation type="journal article" date="2004" name="Cell. Mol. Life Sci.">
        <title>High affinity recognition of a Phytophthora protein by Arabidopsis via an RGD motif.</title>
        <authorList>
            <person name="Senchou V."/>
            <person name="Weide R."/>
            <person name="Carrasco A."/>
            <person name="Bouyssou H."/>
            <person name="Pont-Lezica R."/>
            <person name="Govers F."/>
            <person name="Canut H."/>
        </authorList>
    </citation>
    <scope>DOMAIN</scope>
    <scope>FUNCTION</scope>
    <scope>MUTAGENESIS OF ASP-56</scope>
    <scope>SUBCELLULAR LOCATION</scope>
</reference>
<reference key="4">
    <citation type="journal article" date="2006" name="Plant Physiol.">
        <title>Lectin receptor kinases participate in protein-protein interactions to mediate plasma membrane-cell wall adhesions in Arabidopsis.</title>
        <authorList>
            <person name="Gouget A."/>
            <person name="Senchou V."/>
            <person name="Govers F."/>
            <person name="Sanson A."/>
            <person name="Barre A."/>
            <person name="Rouge P."/>
            <person name="Pont-Lezica R."/>
            <person name="Canut H."/>
        </authorList>
    </citation>
    <scope>DOMAIN</scope>
    <scope>INTERACTION WITH HOST LECRK19</scope>
</reference>
<reference key="5">
    <citation type="journal article" date="2007" name="Nature">
        <title>A translocation signal for delivery of oomycete effector proteins into host plant cells.</title>
        <authorList>
            <person name="Whisson S.C."/>
            <person name="Boevink P.C."/>
            <person name="Moleleki L."/>
            <person name="Avrova A.O."/>
            <person name="Morales J.G."/>
            <person name="Gilroy E.M."/>
            <person name="Armstrong M.R."/>
            <person name="Grouffaud S."/>
            <person name="van West P."/>
            <person name="Chapman S."/>
            <person name="Hein I."/>
            <person name="Toth I.K."/>
            <person name="Pritchard L."/>
            <person name="Birch P.R."/>
        </authorList>
    </citation>
    <scope>INDUCTION</scope>
    <scope>DOMAIN</scope>
</reference>
<reference key="6">
    <citation type="journal article" date="2008" name="PLoS ONE">
        <title>Effector genomics accelerates discovery and functional profiling of potato disease resistance and phytophthora infestans avirulence genes.</title>
        <authorList>
            <person name="Vleeshouwers V.G."/>
            <person name="Rietman H."/>
            <person name="Krenek P."/>
            <person name="Champouret N."/>
            <person name="Young C."/>
            <person name="Oh S.K."/>
            <person name="Wang M."/>
            <person name="Bouwmeester K."/>
            <person name="Vosman B."/>
            <person name="Visser R.G."/>
            <person name="Jacobsen E."/>
            <person name="Govers F."/>
            <person name="Kamoun S."/>
            <person name="Van der Vossen E.A."/>
        </authorList>
    </citation>
    <scope>FUNCTION</scope>
</reference>
<reference key="7">
    <citation type="journal article" date="2009" name="Mol. Plant Microbe Interact.">
        <title>Phytophthora infestans isolates lacking class I ipiO variants are virulent on Rpi-blb1 potato.</title>
        <authorList>
            <person name="Champouret N."/>
            <person name="Bouwmeester K."/>
            <person name="Rietman H."/>
            <person name="van der Lee T."/>
            <person name="Maliepaard C."/>
            <person name="Heupink A."/>
            <person name="van de Vondervoort P.J."/>
            <person name="Jacobsen E."/>
            <person name="Visser R.G."/>
            <person name="van der Vossen E.A."/>
            <person name="Govers F."/>
            <person name="Vleeshouwers V.G."/>
        </authorList>
    </citation>
    <scope>DOMAIN</scope>
    <scope>INTERACTION WITH HOST RGA2/RPI-BLB1</scope>
    <scope>FUNCTION</scope>
</reference>
<reference key="8">
    <citation type="journal article" date="2009" name="Plant Cell">
        <title>In planta expression screens of Phytophthora infestans RXLR effectors reveal diverse phenotypes, including activation of the Solanum bulbocastanum disease resistance protein Rpi-blb2.</title>
        <authorList>
            <person name="Oh S.K."/>
            <person name="Young C."/>
            <person name="Lee M."/>
            <person name="Oliva R."/>
            <person name="Bozkurt T.O."/>
            <person name="Cano L.M."/>
            <person name="Win J."/>
            <person name="Bos J.I."/>
            <person name="Liu H.Y."/>
            <person name="van Damme M."/>
            <person name="Morgan W."/>
            <person name="Choi D."/>
            <person name="Van der Vossen E.A."/>
            <person name="Vleeshouwers V.G."/>
            <person name="Kamoun S."/>
        </authorList>
    </citation>
    <scope>INDUCTION</scope>
    <scope>FUNCTION</scope>
    <scope>DOMAIN</scope>
</reference>
<reference key="9">
    <citation type="journal article" date="2010" name="PLoS ONE">
        <title>Competition between Phytophthora infestans effectors leads to increased aggressiveness on plants containing broad-spectrum late blight resistance.</title>
        <authorList>
            <person name="Halterman D.A."/>
            <person name="Chen Y."/>
            <person name="Sopee J."/>
            <person name="Berduo-Sandoval J."/>
            <person name="Sanchez-Perez A."/>
        </authorList>
    </citation>
    <scope>FUNCTION</scope>
</reference>
<reference key="10">
    <citation type="journal article" date="2011" name="PLoS Pathog.">
        <title>The lectin receptor kinase LecRK-I.9 is a novel Phytophthora resistance component and a potential host target for a RXLR effector.</title>
        <authorList>
            <person name="Bouwmeester K."/>
            <person name="de Sain M."/>
            <person name="Weide R."/>
            <person name="Gouget A."/>
            <person name="Klamer S."/>
            <person name="Canut H."/>
            <person name="Govers F."/>
        </authorList>
    </citation>
    <scope>FUNCTION</scope>
    <scope>DOMAIN</scope>
    <scope>MUTAGENESIS OF ASP-56</scope>
</reference>
<reference key="11">
    <citation type="journal article" date="2012" name="PLoS Pathog.">
        <title>Molecular determinants of resistance activation and suppression by Phytophthora infestans effector IPI-O.</title>
        <authorList>
            <person name="Chen Y."/>
            <person name="Liu Z."/>
            <person name="Halterman D.A."/>
        </authorList>
    </citation>
    <scope>INTERACTION WITH HOST RPI-BLB1</scope>
    <scope>MUTAGENESIS OF LEU-129</scope>
</reference>
<reference key="12">
    <citation type="journal article" date="2017" name="BMC Genomics">
        <title>RNA-seq of life stages of the oomycete Phytophthora infestans reveals dynamic changes in metabolic, signal transduction, and pathogenesis genes and a major role for calcium signaling in development.</title>
        <authorList>
            <person name="Ah-Fong A.M."/>
            <person name="Kim K.S."/>
            <person name="Judelson H.S."/>
        </authorList>
    </citation>
    <scope>INDUCTION</scope>
</reference>
<reference key="13">
    <citation type="journal article" date="2017" name="Front. Plant Sci.">
        <title>Conserved RXLR effector genes of Phytophthora infestans expressed at the early stage of potato infection are suppressive to host defense.</title>
        <authorList>
            <person name="Yin J."/>
            <person name="Gu B."/>
            <person name="Huang G."/>
            <person name="Tian Y."/>
            <person name="Quan J."/>
            <person name="Lindqvist-Kreuze H."/>
            <person name="Shan W."/>
        </authorList>
    </citation>
    <scope>INDUCTION</scope>
    <scope>FUNCTION</scope>
    <scope>DOMAIN</scope>
</reference>
<reference key="14">
    <citation type="journal article" date="2017" name="Phytopathology">
        <title>Phytophthora infestans Effectors IPI-O1 and IPI-O4 Each Contribute to Pathogen Virulence.</title>
        <authorList>
            <person name="Chen Y."/>
            <person name="Halterman D.A."/>
        </authorList>
    </citation>
    <scope>FUNCTION</scope>
</reference>
<reference key="15">
    <citation type="journal article" date="2019" name="J. Exp. Bot.">
        <title>Phytophthora infestans RXLR effectors act in concert at diverse subcellular locations to enhance host colonization.</title>
        <authorList>
            <person name="Wang S."/>
            <person name="McLellan H."/>
            <person name="Bukharova T."/>
            <person name="He Q."/>
            <person name="Murphy F."/>
            <person name="Shi J."/>
            <person name="Sun S."/>
            <person name="van Weymers P."/>
            <person name="Ren Y."/>
            <person name="Thilliez G."/>
            <person name="Wang H."/>
            <person name="Chen X."/>
            <person name="Engelhardt S."/>
            <person name="Vleeshouwers V."/>
            <person name="Gilroy E.M."/>
            <person name="Whisson S.C."/>
            <person name="Hein I."/>
            <person name="Wang X."/>
            <person name="Tian Z."/>
            <person name="Birch P.R.J."/>
            <person name="Boevink P.C."/>
        </authorList>
    </citation>
    <scope>SUBCELLULAR LOCATION</scope>
    <scope>FUNCTION</scope>
</reference>
<evidence type="ECO:0000255" key="1"/>
<evidence type="ECO:0000255" key="2">
    <source>
        <dbReference type="PROSITE-ProRule" id="PRU00498"/>
    </source>
</evidence>
<evidence type="ECO:0000269" key="3">
    <source>
    </source>
</evidence>
<evidence type="ECO:0000269" key="4">
    <source>
    </source>
</evidence>
<evidence type="ECO:0000269" key="5">
    <source>
    </source>
</evidence>
<evidence type="ECO:0000269" key="6">
    <source>
    </source>
</evidence>
<evidence type="ECO:0000269" key="7">
    <source>
    </source>
</evidence>
<evidence type="ECO:0000269" key="8">
    <source>
    </source>
</evidence>
<evidence type="ECO:0000269" key="9">
    <source>
    </source>
</evidence>
<evidence type="ECO:0000269" key="10">
    <source>
    </source>
</evidence>
<evidence type="ECO:0000269" key="11">
    <source>
    </source>
</evidence>
<evidence type="ECO:0000269" key="12">
    <source>
    </source>
</evidence>
<evidence type="ECO:0000269" key="13">
    <source>
    </source>
</evidence>
<evidence type="ECO:0000269" key="14">
    <source>
    </source>
</evidence>
<evidence type="ECO:0000269" key="15">
    <source>
    </source>
</evidence>
<evidence type="ECO:0000269" key="16">
    <source>
    </source>
</evidence>
<evidence type="ECO:0000269" key="17">
    <source>
    </source>
</evidence>
<evidence type="ECO:0000303" key="18">
    <source>
    </source>
</evidence>
<evidence type="ECO:0000303" key="19">
    <source>
    </source>
</evidence>
<evidence type="ECO:0000305" key="20"/>
<evidence type="ECO:0000305" key="21">
    <source>
    </source>
</evidence>
<evidence type="ECO:0000305" key="22">
    <source>
    </source>
</evidence>
<evidence type="ECO:0000305" key="23">
    <source>
    </source>
</evidence>
<feature type="signal peptide" evidence="1">
    <location>
        <begin position="1"/>
        <end position="24"/>
    </location>
</feature>
<feature type="chain" id="PRO_5003013206" description="RxLR effector protein Avrblb1">
    <location>
        <begin position="25"/>
        <end position="152"/>
    </location>
</feature>
<feature type="region of interest" description="W motif" evidence="23">
    <location>
        <begin position="99"/>
        <end position="152"/>
    </location>
</feature>
<feature type="short sequence motif" description="RxLR-dEER" evidence="22">
    <location>
        <begin position="51"/>
        <end position="72"/>
    </location>
</feature>
<feature type="short sequence motif" description="RGD RLK-binding motif" evidence="21">
    <location>
        <begin position="54"/>
        <end position="56"/>
    </location>
</feature>
<feature type="glycosylation site" description="N-linked (GlcNAc...) asparagine" evidence="2">
    <location>
        <position position="66"/>
    </location>
</feature>
<feature type="mutagenesis site" description="Impairs the ability to disrupt attachments between the host plasma membrane and cell wall." evidence="3 11">
    <original>D</original>
    <variation>A</variation>
    <variation>E</variation>
    <location>
        <position position="56"/>
    </location>
</feature>
<feature type="mutagenesis site" description="Fails to elicit the RGA2/Rpi-blb1-mediated hypersensitive response in host." evidence="12">
    <original>L</original>
    <variation>P</variation>
    <location>
        <position position="129"/>
    </location>
</feature>
<comment type="function">
    <text evidence="3 6 8 9 10 11 14 16">Secreted effector that acts as an elicitor of hypersensitive response (HR) specifically on plants carrying defense protein RGA2/Rpi-blb1 (PubMed:18682852, PubMed:19794118, PubMed:19888819, PubMed:20479869, PubMed:21483488). Enhances P.infestans colonization of plant hosts Nicotiana benthamiana and potato Solanum bulbocastanum leaves (PubMed:28350531, PubMed:30329083). Associates with host legume-type lectin receptor kinases and disrupts attachments between the host plasma membrane and cell wall (PubMed:14999409, PubMed:21483488).</text>
</comment>
<comment type="subunit">
    <text evidence="4 9 12">Interacts with host defense protein RGA2/Rpi-blb1 (PubMed:19888819, PubMed:22438813). Interacts with host legume-type lectin receptor kinase LECRK19 (PubMed:16361528).</text>
</comment>
<comment type="subcellular location">
    <subcellularLocation>
        <location evidence="16">Secreted</location>
    </subcellularLocation>
    <subcellularLocation>
        <location evidence="16">Host nucleus</location>
        <location evidence="16">Host nucleolus</location>
    </subcellularLocation>
    <subcellularLocation>
        <location evidence="16">Host nucleus</location>
    </subcellularLocation>
    <subcellularLocation>
        <location evidence="3">Host cell membrane</location>
    </subcellularLocation>
</comment>
<comment type="induction">
    <text evidence="5 7 8 13 15 17">Expression is induced during host plant infection.</text>
</comment>
<comment type="domain">
    <text evidence="22">The RxLR-dEER motif acts to carry the protein into the host cell cytoplasm through binding to cell surface phosphatidylinositol-3-phosphate.</text>
</comment>
<comment type="domain">
    <text evidence="3 4 11">The RGD RLK-binding motif is required for binding to host legume-type lectin receptor kinases and disruption of the attachments between the host plasma membrane and cell wall.</text>
</comment>
<comment type="domain">
    <text evidence="9">The conserved W motif is found in already well characterized effectors and is essential for triggering RGA2/Rpi-blb1-mediated cell death.</text>
</comment>
<comment type="similarity">
    <text evidence="20">Belongs to the RxLR effector family.</text>
</comment>
<organism>
    <name type="scientific">Phytophthora infestans (strain T30-4)</name>
    <name type="common">Potato late blight agent</name>
    <dbReference type="NCBI Taxonomy" id="403677"/>
    <lineage>
        <taxon>Eukaryota</taxon>
        <taxon>Sar</taxon>
        <taxon>Stramenopiles</taxon>
        <taxon>Oomycota</taxon>
        <taxon>Peronosporales</taxon>
        <taxon>Peronosporaceae</taxon>
        <taxon>Phytophthora</taxon>
    </lineage>
</organism>
<gene>
    <name evidence="18" type="primary">Avrblb1</name>
    <name evidence="19" type="synonym">IpiO1</name>
    <name evidence="18" type="synonym">PexRD6</name>
    <name type="ORF">PITG_21388</name>
</gene>
<accession>D0P3S7</accession>
<protein>
    <recommendedName>
        <fullName evidence="18">RxLR effector protein Avrblb1</fullName>
    </recommendedName>
    <alternativeName>
        <fullName evidence="18">Avirulence protein Avrblb1</fullName>
    </alternativeName>
    <alternativeName>
        <fullName evidence="19">In planta-induced protein O1</fullName>
        <shortName evidence="19">IPI-O1</shortName>
    </alternativeName>
</protein>
<dbReference type="EMBL" id="DS028419">
    <property type="protein sequence ID" value="EEY61733.1"/>
    <property type="molecule type" value="Genomic_DNA"/>
</dbReference>
<dbReference type="RefSeq" id="XP_002895051.1">
    <property type="nucleotide sequence ID" value="XM_002895005.1"/>
</dbReference>
<dbReference type="STRING" id="403677.D0P3S7"/>
<dbReference type="GlyCosmos" id="D0P3S7">
    <property type="glycosylation" value="1 site, No reported glycans"/>
</dbReference>
<dbReference type="EnsemblProtists" id="PITG_21388T0">
    <property type="protein sequence ID" value="PITG_21388T0"/>
    <property type="gene ID" value="PITG_21388"/>
</dbReference>
<dbReference type="GeneID" id="9466643"/>
<dbReference type="KEGG" id="pif:PITG_21388"/>
<dbReference type="VEuPathDB" id="FungiDB:PITG_21388"/>
<dbReference type="eggNOG" id="ENOG502RGT9">
    <property type="taxonomic scope" value="Eukaryota"/>
</dbReference>
<dbReference type="HOGENOM" id="CLU_135914_0_0_1"/>
<dbReference type="InParanoid" id="D0P3S7"/>
<dbReference type="OMA" id="SAEYVKM"/>
<dbReference type="OrthoDB" id="120748at2759"/>
<dbReference type="PHI-base" id="PHI:10637"/>
<dbReference type="Proteomes" id="UP000006643">
    <property type="component" value="Partially assembled WGS sequence"/>
</dbReference>
<dbReference type="GO" id="GO:0005576">
    <property type="term" value="C:extracellular region"/>
    <property type="evidence" value="ECO:0007669"/>
    <property type="project" value="UniProtKB-SubCell"/>
</dbReference>
<dbReference type="GO" id="GO:0044196">
    <property type="term" value="C:host cell nucleolus"/>
    <property type="evidence" value="ECO:0007669"/>
    <property type="project" value="UniProtKB-SubCell"/>
</dbReference>
<dbReference type="GO" id="GO:0020002">
    <property type="term" value="C:host cell plasma membrane"/>
    <property type="evidence" value="ECO:0007669"/>
    <property type="project" value="UniProtKB-SubCell"/>
</dbReference>
<dbReference type="GO" id="GO:0016020">
    <property type="term" value="C:membrane"/>
    <property type="evidence" value="ECO:0007669"/>
    <property type="project" value="UniProtKB-KW"/>
</dbReference>
<name>ABLB1_PHYIT</name>
<proteinExistence type="evidence at protein level"/>
<sequence length="152" mass="17242">MRSLLLTVLLNLVVLLATTGAVSSNLNTAVNYASTSKIRFLSTEYNADEKRSLRGDYNNEVTKEPNTSDEERAFSISKSAEYVKMVLYGFKLGFSPRTQSKTVLRYEDKLFTALYKSGETPRSLRTKHLDKASASVFFNRFKKWYDKNVGPS</sequence>